<reference key="1">
    <citation type="journal article" date="1995" name="DNA Res.">
        <title>Cloning and sequencing of a 36-kb region of the Bacillus subtilis genome between the gnt and iol operons.</title>
        <authorList>
            <person name="Yoshida K."/>
            <person name="Seki S."/>
            <person name="Fujimura M."/>
            <person name="Miwa Y."/>
            <person name="Fujita Y."/>
        </authorList>
    </citation>
    <scope>NUCLEOTIDE SEQUENCE [GENOMIC DNA]</scope>
    <source>
        <strain>168 / BGSC1A1</strain>
    </source>
</reference>
<reference key="2">
    <citation type="journal article" date="1997" name="Nature">
        <title>The complete genome sequence of the Gram-positive bacterium Bacillus subtilis.</title>
        <authorList>
            <person name="Kunst F."/>
            <person name="Ogasawara N."/>
            <person name="Moszer I."/>
            <person name="Albertini A.M."/>
            <person name="Alloni G."/>
            <person name="Azevedo V."/>
            <person name="Bertero M.G."/>
            <person name="Bessieres P."/>
            <person name="Bolotin A."/>
            <person name="Borchert S."/>
            <person name="Borriss R."/>
            <person name="Boursier L."/>
            <person name="Brans A."/>
            <person name="Braun M."/>
            <person name="Brignell S.C."/>
            <person name="Bron S."/>
            <person name="Brouillet S."/>
            <person name="Bruschi C.V."/>
            <person name="Caldwell B."/>
            <person name="Capuano V."/>
            <person name="Carter N.M."/>
            <person name="Choi S.-K."/>
            <person name="Codani J.-J."/>
            <person name="Connerton I.F."/>
            <person name="Cummings N.J."/>
            <person name="Daniel R.A."/>
            <person name="Denizot F."/>
            <person name="Devine K.M."/>
            <person name="Duesterhoeft A."/>
            <person name="Ehrlich S.D."/>
            <person name="Emmerson P.T."/>
            <person name="Entian K.-D."/>
            <person name="Errington J."/>
            <person name="Fabret C."/>
            <person name="Ferrari E."/>
            <person name="Foulger D."/>
            <person name="Fritz C."/>
            <person name="Fujita M."/>
            <person name="Fujita Y."/>
            <person name="Fuma S."/>
            <person name="Galizzi A."/>
            <person name="Galleron N."/>
            <person name="Ghim S.-Y."/>
            <person name="Glaser P."/>
            <person name="Goffeau A."/>
            <person name="Golightly E.J."/>
            <person name="Grandi G."/>
            <person name="Guiseppi G."/>
            <person name="Guy B.J."/>
            <person name="Haga K."/>
            <person name="Haiech J."/>
            <person name="Harwood C.R."/>
            <person name="Henaut A."/>
            <person name="Hilbert H."/>
            <person name="Holsappel S."/>
            <person name="Hosono S."/>
            <person name="Hullo M.-F."/>
            <person name="Itaya M."/>
            <person name="Jones L.-M."/>
            <person name="Joris B."/>
            <person name="Karamata D."/>
            <person name="Kasahara Y."/>
            <person name="Klaerr-Blanchard M."/>
            <person name="Klein C."/>
            <person name="Kobayashi Y."/>
            <person name="Koetter P."/>
            <person name="Koningstein G."/>
            <person name="Krogh S."/>
            <person name="Kumano M."/>
            <person name="Kurita K."/>
            <person name="Lapidus A."/>
            <person name="Lardinois S."/>
            <person name="Lauber J."/>
            <person name="Lazarevic V."/>
            <person name="Lee S.-M."/>
            <person name="Levine A."/>
            <person name="Liu H."/>
            <person name="Masuda S."/>
            <person name="Mauel C."/>
            <person name="Medigue C."/>
            <person name="Medina N."/>
            <person name="Mellado R.P."/>
            <person name="Mizuno M."/>
            <person name="Moestl D."/>
            <person name="Nakai S."/>
            <person name="Noback M."/>
            <person name="Noone D."/>
            <person name="O'Reilly M."/>
            <person name="Ogawa K."/>
            <person name="Ogiwara A."/>
            <person name="Oudega B."/>
            <person name="Park S.-H."/>
            <person name="Parro V."/>
            <person name="Pohl T.M."/>
            <person name="Portetelle D."/>
            <person name="Porwollik S."/>
            <person name="Prescott A.M."/>
            <person name="Presecan E."/>
            <person name="Pujic P."/>
            <person name="Purnelle B."/>
            <person name="Rapoport G."/>
            <person name="Rey M."/>
            <person name="Reynolds S."/>
            <person name="Rieger M."/>
            <person name="Rivolta C."/>
            <person name="Rocha E."/>
            <person name="Roche B."/>
            <person name="Rose M."/>
            <person name="Sadaie Y."/>
            <person name="Sato T."/>
            <person name="Scanlan E."/>
            <person name="Schleich S."/>
            <person name="Schroeter R."/>
            <person name="Scoffone F."/>
            <person name="Sekiguchi J."/>
            <person name="Sekowska A."/>
            <person name="Seror S.J."/>
            <person name="Serror P."/>
            <person name="Shin B.-S."/>
            <person name="Soldo B."/>
            <person name="Sorokin A."/>
            <person name="Tacconi E."/>
            <person name="Takagi T."/>
            <person name="Takahashi H."/>
            <person name="Takemaru K."/>
            <person name="Takeuchi M."/>
            <person name="Tamakoshi A."/>
            <person name="Tanaka T."/>
            <person name="Terpstra P."/>
            <person name="Tognoni A."/>
            <person name="Tosato V."/>
            <person name="Uchiyama S."/>
            <person name="Vandenbol M."/>
            <person name="Vannier F."/>
            <person name="Vassarotti A."/>
            <person name="Viari A."/>
            <person name="Wambutt R."/>
            <person name="Wedler E."/>
            <person name="Wedler H."/>
            <person name="Weitzenegger T."/>
            <person name="Winters P."/>
            <person name="Wipat A."/>
            <person name="Yamamoto H."/>
            <person name="Yamane K."/>
            <person name="Yasumoto K."/>
            <person name="Yata K."/>
            <person name="Yoshida K."/>
            <person name="Yoshikawa H.-F."/>
            <person name="Zumstein E."/>
            <person name="Yoshikawa H."/>
            <person name="Danchin A."/>
        </authorList>
    </citation>
    <scope>NUCLEOTIDE SEQUENCE [LARGE SCALE GENOMIC DNA]</scope>
    <source>
        <strain>168</strain>
    </source>
</reference>
<protein>
    <recommendedName>
        <fullName evidence="1">Chaperone protein HtpG</fullName>
    </recommendedName>
    <alternativeName>
        <fullName evidence="1">Heat shock protein HtpG</fullName>
    </alternativeName>
    <alternativeName>
        <fullName evidence="1">High temperature protein G</fullName>
    </alternativeName>
</protein>
<organism>
    <name type="scientific">Bacillus subtilis (strain 168)</name>
    <dbReference type="NCBI Taxonomy" id="224308"/>
    <lineage>
        <taxon>Bacteria</taxon>
        <taxon>Bacillati</taxon>
        <taxon>Bacillota</taxon>
        <taxon>Bacilli</taxon>
        <taxon>Bacillales</taxon>
        <taxon>Bacillaceae</taxon>
        <taxon>Bacillus</taxon>
    </lineage>
</organism>
<accession>P46208</accession>
<comment type="function">
    <text evidence="1">Molecular chaperone. Has ATPase activity.</text>
</comment>
<comment type="subunit">
    <text evidence="1">Homodimer.</text>
</comment>
<comment type="subcellular location">
    <subcellularLocation>
        <location evidence="1">Cytoplasm</location>
    </subcellularLocation>
</comment>
<comment type="similarity">
    <text evidence="1">Belongs to the heat shock protein 90 family.</text>
</comment>
<dbReference type="EMBL" id="AB005554">
    <property type="protein sequence ID" value="BAA21603.1"/>
    <property type="molecule type" value="Genomic_DNA"/>
</dbReference>
<dbReference type="EMBL" id="AL009126">
    <property type="protein sequence ID" value="CAB16018.1"/>
    <property type="molecule type" value="Genomic_DNA"/>
</dbReference>
<dbReference type="PIR" id="H69642">
    <property type="entry name" value="H69642"/>
</dbReference>
<dbReference type="RefSeq" id="NP_391861.1">
    <property type="nucleotide sequence ID" value="NC_000964.3"/>
</dbReference>
<dbReference type="RefSeq" id="WP_003243561.1">
    <property type="nucleotide sequence ID" value="NZ_OZ025638.1"/>
</dbReference>
<dbReference type="SMR" id="P46208"/>
<dbReference type="FunCoup" id="P46208">
    <property type="interactions" value="461"/>
</dbReference>
<dbReference type="IntAct" id="P46208">
    <property type="interactions" value="1"/>
</dbReference>
<dbReference type="STRING" id="224308.BSU39820"/>
<dbReference type="jPOST" id="P46208"/>
<dbReference type="PaxDb" id="224308-BSU39820"/>
<dbReference type="EnsemblBacteria" id="CAB16018">
    <property type="protein sequence ID" value="CAB16018"/>
    <property type="gene ID" value="BSU_39820"/>
</dbReference>
<dbReference type="GeneID" id="937631"/>
<dbReference type="KEGG" id="bsu:BSU39820"/>
<dbReference type="PATRIC" id="fig|224308.179.peg.4308"/>
<dbReference type="eggNOG" id="COG0326">
    <property type="taxonomic scope" value="Bacteria"/>
</dbReference>
<dbReference type="InParanoid" id="P46208"/>
<dbReference type="OrthoDB" id="9802640at2"/>
<dbReference type="PhylomeDB" id="P46208"/>
<dbReference type="BioCyc" id="BSUB:BSU39820-MONOMER"/>
<dbReference type="Proteomes" id="UP000001570">
    <property type="component" value="Chromosome"/>
</dbReference>
<dbReference type="GO" id="GO:0005829">
    <property type="term" value="C:cytosol"/>
    <property type="evidence" value="ECO:0000318"/>
    <property type="project" value="GO_Central"/>
</dbReference>
<dbReference type="GO" id="GO:0005524">
    <property type="term" value="F:ATP binding"/>
    <property type="evidence" value="ECO:0000318"/>
    <property type="project" value="GO_Central"/>
</dbReference>
<dbReference type="GO" id="GO:0016887">
    <property type="term" value="F:ATP hydrolysis activity"/>
    <property type="evidence" value="ECO:0000318"/>
    <property type="project" value="GO_Central"/>
</dbReference>
<dbReference type="GO" id="GO:0140662">
    <property type="term" value="F:ATP-dependent protein folding chaperone"/>
    <property type="evidence" value="ECO:0007669"/>
    <property type="project" value="InterPro"/>
</dbReference>
<dbReference type="GO" id="GO:0051082">
    <property type="term" value="F:unfolded protein binding"/>
    <property type="evidence" value="ECO:0000318"/>
    <property type="project" value="GO_Central"/>
</dbReference>
<dbReference type="GO" id="GO:0006974">
    <property type="term" value="P:DNA damage response"/>
    <property type="evidence" value="ECO:0000318"/>
    <property type="project" value="GO_Central"/>
</dbReference>
<dbReference type="GO" id="GO:0006457">
    <property type="term" value="P:protein folding"/>
    <property type="evidence" value="ECO:0000318"/>
    <property type="project" value="GO_Central"/>
</dbReference>
<dbReference type="GO" id="GO:0009408">
    <property type="term" value="P:response to heat"/>
    <property type="evidence" value="ECO:0000318"/>
    <property type="project" value="GO_Central"/>
</dbReference>
<dbReference type="CDD" id="cd16927">
    <property type="entry name" value="HATPase_Hsp90-like"/>
    <property type="match status" value="1"/>
</dbReference>
<dbReference type="FunFam" id="1.20.120.790:FF:000006">
    <property type="entry name" value="Chaperone protein HtpG"/>
    <property type="match status" value="1"/>
</dbReference>
<dbReference type="FunFam" id="3.40.50.11260:FF:000008">
    <property type="entry name" value="Chaperone protein HtpG"/>
    <property type="match status" value="1"/>
</dbReference>
<dbReference type="FunFam" id="3.30.230.80:FF:000002">
    <property type="entry name" value="Molecular chaperone HtpG"/>
    <property type="match status" value="1"/>
</dbReference>
<dbReference type="FunFam" id="3.30.565.10:FF:000009">
    <property type="entry name" value="Molecular chaperone HtpG"/>
    <property type="match status" value="1"/>
</dbReference>
<dbReference type="Gene3D" id="3.30.230.80">
    <property type="match status" value="1"/>
</dbReference>
<dbReference type="Gene3D" id="3.40.50.11260">
    <property type="match status" value="1"/>
</dbReference>
<dbReference type="Gene3D" id="1.20.120.790">
    <property type="entry name" value="Heat shock protein 90, C-terminal domain"/>
    <property type="match status" value="1"/>
</dbReference>
<dbReference type="Gene3D" id="3.30.565.10">
    <property type="entry name" value="Histidine kinase-like ATPase, C-terminal domain"/>
    <property type="match status" value="1"/>
</dbReference>
<dbReference type="HAMAP" id="MF_00505">
    <property type="entry name" value="HSP90"/>
    <property type="match status" value="1"/>
</dbReference>
<dbReference type="InterPro" id="IPR036890">
    <property type="entry name" value="HATPase_C_sf"/>
</dbReference>
<dbReference type="InterPro" id="IPR019805">
    <property type="entry name" value="Heat_shock_protein_90_CS"/>
</dbReference>
<dbReference type="InterPro" id="IPR037196">
    <property type="entry name" value="HSP90_C"/>
</dbReference>
<dbReference type="InterPro" id="IPR001404">
    <property type="entry name" value="Hsp90_fam"/>
</dbReference>
<dbReference type="InterPro" id="IPR020575">
    <property type="entry name" value="Hsp90_N"/>
</dbReference>
<dbReference type="InterPro" id="IPR020568">
    <property type="entry name" value="Ribosomal_Su5_D2-typ_SF"/>
</dbReference>
<dbReference type="NCBIfam" id="NF003555">
    <property type="entry name" value="PRK05218.1"/>
    <property type="match status" value="1"/>
</dbReference>
<dbReference type="PANTHER" id="PTHR11528">
    <property type="entry name" value="HEAT SHOCK PROTEIN 90 FAMILY MEMBER"/>
    <property type="match status" value="1"/>
</dbReference>
<dbReference type="Pfam" id="PF13589">
    <property type="entry name" value="HATPase_c_3"/>
    <property type="match status" value="1"/>
</dbReference>
<dbReference type="Pfam" id="PF00183">
    <property type="entry name" value="HSP90"/>
    <property type="match status" value="2"/>
</dbReference>
<dbReference type="PIRSF" id="PIRSF002583">
    <property type="entry name" value="Hsp90"/>
    <property type="match status" value="1"/>
</dbReference>
<dbReference type="PRINTS" id="PR00775">
    <property type="entry name" value="HEATSHOCK90"/>
</dbReference>
<dbReference type="SMART" id="SM00387">
    <property type="entry name" value="HATPase_c"/>
    <property type="match status" value="1"/>
</dbReference>
<dbReference type="SUPFAM" id="SSF55874">
    <property type="entry name" value="ATPase domain of HSP90 chaperone/DNA topoisomerase II/histidine kinase"/>
    <property type="match status" value="1"/>
</dbReference>
<dbReference type="SUPFAM" id="SSF110942">
    <property type="entry name" value="HSP90 C-terminal domain"/>
    <property type="match status" value="1"/>
</dbReference>
<dbReference type="SUPFAM" id="SSF54211">
    <property type="entry name" value="Ribosomal protein S5 domain 2-like"/>
    <property type="match status" value="1"/>
</dbReference>
<dbReference type="PROSITE" id="PS00298">
    <property type="entry name" value="HSP90"/>
    <property type="match status" value="1"/>
</dbReference>
<keyword id="KW-0067">ATP-binding</keyword>
<keyword id="KW-0143">Chaperone</keyword>
<keyword id="KW-0963">Cytoplasm</keyword>
<keyword id="KW-0547">Nucleotide-binding</keyword>
<keyword id="KW-1185">Reference proteome</keyword>
<keyword id="KW-0346">Stress response</keyword>
<proteinExistence type="inferred from homology"/>
<name>HTPG_BACSU</name>
<gene>
    <name evidence="1" type="primary">htpG</name>
    <name type="synonym">yxbB</name>
    <name type="ordered locus">BSU39820</name>
    <name type="ORF">SS92A</name>
</gene>
<sequence>MAKKEFKAESKRLLDMMINSIYTQKEIFLRELISNSSDAIDKIYYKALTDDALTFDKDSYYIKVAADKDARTLTISDTGIGMTKDELEQHLGTIAKSGSLAFKKENELKDGHDIIGQFGVGFYAAFMVADVVTVISKALGSEEAYKWESAGADGYTIEPCEKDSVGTDIILKIKENTEDDSYDEFLEEYRLKAIIKKYSDFIRYPIKMDTTINKPKEGSENEFEEVQEEQTVNSMVPIWRKNKSELTDEDYEKFYAEKHYGFDKPLTHVHISVDGAVRYNAILFVPENMPFDYYSKEYEKGLELYSNGVLIMNKCADLLPDHFSFVKGMVDSEDLSLNISREMLQHDRQLKLIAKNISKKIKSELQSLLKKDREKYETFYKSFGRQLKFGVYNDFGANKDQLKDLLLFYSSKEKKLVSLDEYVSRMPEEQKFIYYATGDSYDRIEKLPQTEMVADKGYEILYFTEDIDEFAIKMLASYQEKEFKSVSSGDLGIDTDEDQKQSEEEESKYKDLFEEMKNILSDKVKNVRISKRLKSHPVCLAADGEVTIEMEKILNAMPDSQNVKAEKVLEINPNHEVFQTLQDAFEQDKEKLSLYTNLLYNQALLIEGLPIQDPVEFTNNICKVMV</sequence>
<evidence type="ECO:0000255" key="1">
    <source>
        <dbReference type="HAMAP-Rule" id="MF_00505"/>
    </source>
</evidence>
<feature type="chain" id="PRO_0000062968" description="Chaperone protein HtpG">
    <location>
        <begin position="1"/>
        <end position="626"/>
    </location>
</feature>
<feature type="region of interest" description="A; substrate-binding" evidence="1">
    <location>
        <begin position="1"/>
        <end position="341"/>
    </location>
</feature>
<feature type="region of interest" description="B" evidence="1">
    <location>
        <begin position="342"/>
        <end position="552"/>
    </location>
</feature>
<feature type="region of interest" description="C" evidence="1">
    <location>
        <begin position="553"/>
        <end position="626"/>
    </location>
</feature>